<protein>
    <recommendedName>
        <fullName evidence="1">Hydrogenase maturation factor HypA</fullName>
    </recommendedName>
</protein>
<comment type="function">
    <text evidence="1">Involved in the maturation of [NiFe] hydrogenases. Required for nickel insertion into the metal center of the hydrogenase.</text>
</comment>
<comment type="similarity">
    <text evidence="1">Belongs to the HypA/HybF family.</text>
</comment>
<dbReference type="EMBL" id="AE009950">
    <property type="protein sequence ID" value="AAL80739.1"/>
    <property type="molecule type" value="Genomic_DNA"/>
</dbReference>
<dbReference type="RefSeq" id="WP_011011735.1">
    <property type="nucleotide sequence ID" value="NZ_CP023154.1"/>
</dbReference>
<dbReference type="SMR" id="Q8U357"/>
<dbReference type="STRING" id="186497.PF0615"/>
<dbReference type="PaxDb" id="186497-PF0615"/>
<dbReference type="GeneID" id="41712420"/>
<dbReference type="KEGG" id="pfu:PF0615"/>
<dbReference type="PATRIC" id="fig|186497.12.peg.646"/>
<dbReference type="eggNOG" id="arCOG04426">
    <property type="taxonomic scope" value="Archaea"/>
</dbReference>
<dbReference type="HOGENOM" id="CLU_126929_2_0_2"/>
<dbReference type="OrthoDB" id="36835at2157"/>
<dbReference type="PhylomeDB" id="Q8U357"/>
<dbReference type="Proteomes" id="UP000001013">
    <property type="component" value="Chromosome"/>
</dbReference>
<dbReference type="GO" id="GO:0016151">
    <property type="term" value="F:nickel cation binding"/>
    <property type="evidence" value="ECO:0007669"/>
    <property type="project" value="UniProtKB-UniRule"/>
</dbReference>
<dbReference type="GO" id="GO:0008270">
    <property type="term" value="F:zinc ion binding"/>
    <property type="evidence" value="ECO:0007669"/>
    <property type="project" value="UniProtKB-UniRule"/>
</dbReference>
<dbReference type="GO" id="GO:0051604">
    <property type="term" value="P:protein maturation"/>
    <property type="evidence" value="ECO:0007669"/>
    <property type="project" value="InterPro"/>
</dbReference>
<dbReference type="GO" id="GO:0036211">
    <property type="term" value="P:protein modification process"/>
    <property type="evidence" value="ECO:0007669"/>
    <property type="project" value="UniProtKB-UniRule"/>
</dbReference>
<dbReference type="FunFam" id="3.30.2320.80:FF:000004">
    <property type="entry name" value="Hydrogenase maturation factor HypA"/>
    <property type="match status" value="1"/>
</dbReference>
<dbReference type="Gene3D" id="3.30.2320.80">
    <property type="match status" value="1"/>
</dbReference>
<dbReference type="HAMAP" id="MF_00213">
    <property type="entry name" value="HypA_HybF"/>
    <property type="match status" value="1"/>
</dbReference>
<dbReference type="InterPro" id="IPR020538">
    <property type="entry name" value="Hydgase_Ni_incorp_HypA/HybF_CS"/>
</dbReference>
<dbReference type="InterPro" id="IPR000688">
    <property type="entry name" value="HypA/HybF"/>
</dbReference>
<dbReference type="NCBIfam" id="NF003008">
    <property type="entry name" value="PRK03824.1"/>
    <property type="match status" value="1"/>
</dbReference>
<dbReference type="PANTHER" id="PTHR34535">
    <property type="entry name" value="HYDROGENASE MATURATION FACTOR HYPA"/>
    <property type="match status" value="1"/>
</dbReference>
<dbReference type="PANTHER" id="PTHR34535:SF3">
    <property type="entry name" value="HYDROGENASE MATURATION FACTOR HYPA"/>
    <property type="match status" value="1"/>
</dbReference>
<dbReference type="Pfam" id="PF01155">
    <property type="entry name" value="HypA"/>
    <property type="match status" value="1"/>
</dbReference>
<dbReference type="PIRSF" id="PIRSF004761">
    <property type="entry name" value="Hydrgn_mat_HypA"/>
    <property type="match status" value="1"/>
</dbReference>
<dbReference type="PROSITE" id="PS01249">
    <property type="entry name" value="HYPA"/>
    <property type="match status" value="1"/>
</dbReference>
<name>HYPA_PYRFU</name>
<proteinExistence type="inferred from homology"/>
<evidence type="ECO:0000255" key="1">
    <source>
        <dbReference type="HAMAP-Rule" id="MF_00213"/>
    </source>
</evidence>
<keyword id="KW-0479">Metal-binding</keyword>
<keyword id="KW-0533">Nickel</keyword>
<keyword id="KW-1185">Reference proteome</keyword>
<keyword id="KW-0862">Zinc</keyword>
<accession>Q8U357</accession>
<reference key="1">
    <citation type="journal article" date="1999" name="Genetics">
        <title>Divergence of the hyperthermophilic archaea Pyrococcus furiosus and P. horikoshii inferred from complete genomic sequences.</title>
        <authorList>
            <person name="Maeder D.L."/>
            <person name="Weiss R.B."/>
            <person name="Dunn D.M."/>
            <person name="Cherry J.L."/>
            <person name="Gonzalez J.M."/>
            <person name="DiRuggiero J."/>
            <person name="Robb F.T."/>
        </authorList>
    </citation>
    <scope>NUCLEOTIDE SEQUENCE [LARGE SCALE GENOMIC DNA]</scope>
    <source>
        <strain>ATCC 43587 / DSM 3638 / JCM 8422 / Vc1</strain>
    </source>
</reference>
<feature type="chain" id="PRO_0000129083" description="Hydrogenase maturation factor HypA">
    <location>
        <begin position="1"/>
        <end position="139"/>
    </location>
</feature>
<feature type="binding site" evidence="1">
    <location>
        <position position="2"/>
    </location>
    <ligand>
        <name>Ni(2+)</name>
        <dbReference type="ChEBI" id="CHEBI:49786"/>
    </ligand>
</feature>
<feature type="binding site" evidence="1">
    <location>
        <position position="73"/>
    </location>
    <ligand>
        <name>Zn(2+)</name>
        <dbReference type="ChEBI" id="CHEBI:29105"/>
    </ligand>
</feature>
<feature type="binding site" evidence="1">
    <location>
        <position position="76"/>
    </location>
    <ligand>
        <name>Zn(2+)</name>
        <dbReference type="ChEBI" id="CHEBI:29105"/>
    </ligand>
</feature>
<feature type="binding site" evidence="1">
    <location>
        <position position="110"/>
    </location>
    <ligand>
        <name>Zn(2+)</name>
        <dbReference type="ChEBI" id="CHEBI:29105"/>
    </ligand>
</feature>
<feature type="binding site" evidence="1">
    <location>
        <position position="113"/>
    </location>
    <ligand>
        <name>Zn(2+)</name>
        <dbReference type="ChEBI" id="CHEBI:29105"/>
    </ligand>
</feature>
<organism>
    <name type="scientific">Pyrococcus furiosus (strain ATCC 43587 / DSM 3638 / JCM 8422 / Vc1)</name>
    <dbReference type="NCBI Taxonomy" id="186497"/>
    <lineage>
        <taxon>Archaea</taxon>
        <taxon>Methanobacteriati</taxon>
        <taxon>Methanobacteriota</taxon>
        <taxon>Thermococci</taxon>
        <taxon>Thermococcales</taxon>
        <taxon>Thermococcaceae</taxon>
        <taxon>Pyrococcus</taxon>
    </lineage>
</organism>
<gene>
    <name evidence="1" type="primary">hypA</name>
    <name type="ordered locus">PF0615</name>
</gene>
<sequence>MHEWALADAIVRTVLDYAQKEGASRVKAVKVVLGELQDVGEDIVKFAMEELFRGTIAEGAEIIFEEEEAVFKCRNCGHVWKLKEVKDKLDERIREDIHFIPEVVHAFLSCPKCGSHDFEVVKGRGVYISGIMIEKEGEE</sequence>